<proteinExistence type="predicted"/>
<accession>Q58182</accession>
<keyword id="KW-1185">Reference proteome</keyword>
<reference key="1">
    <citation type="journal article" date="1996" name="Science">
        <title>Complete genome sequence of the methanogenic archaeon, Methanococcus jannaschii.</title>
        <authorList>
            <person name="Bult C.J."/>
            <person name="White O."/>
            <person name="Olsen G.J."/>
            <person name="Zhou L."/>
            <person name="Fleischmann R.D."/>
            <person name="Sutton G.G."/>
            <person name="Blake J.A."/>
            <person name="FitzGerald L.M."/>
            <person name="Clayton R.A."/>
            <person name="Gocayne J.D."/>
            <person name="Kerlavage A.R."/>
            <person name="Dougherty B.A."/>
            <person name="Tomb J.-F."/>
            <person name="Adams M.D."/>
            <person name="Reich C.I."/>
            <person name="Overbeek R."/>
            <person name="Kirkness E.F."/>
            <person name="Weinstock K.G."/>
            <person name="Merrick J.M."/>
            <person name="Glodek A."/>
            <person name="Scott J.L."/>
            <person name="Geoghagen N.S.M."/>
            <person name="Weidman J.F."/>
            <person name="Fuhrmann J.L."/>
            <person name="Nguyen D."/>
            <person name="Utterback T.R."/>
            <person name="Kelley J.M."/>
            <person name="Peterson J.D."/>
            <person name="Sadow P.W."/>
            <person name="Hanna M.C."/>
            <person name="Cotton M.D."/>
            <person name="Roberts K.M."/>
            <person name="Hurst M.A."/>
            <person name="Kaine B.P."/>
            <person name="Borodovsky M."/>
            <person name="Klenk H.-P."/>
            <person name="Fraser C.M."/>
            <person name="Smith H.O."/>
            <person name="Woese C.R."/>
            <person name="Venter J.C."/>
        </authorList>
    </citation>
    <scope>NUCLEOTIDE SEQUENCE [LARGE SCALE GENOMIC DNA]</scope>
    <source>
        <strain>ATCC 43067 / DSM 2661 / JAL-1 / JCM 10045 / NBRC 100440</strain>
    </source>
</reference>
<feature type="chain" id="PRO_0000107026" description="Uncharacterized protein MJ0772">
    <location>
        <begin position="1"/>
        <end position="353"/>
    </location>
</feature>
<protein>
    <recommendedName>
        <fullName>Uncharacterized protein MJ0772</fullName>
    </recommendedName>
</protein>
<organism>
    <name type="scientific">Methanocaldococcus jannaschii (strain ATCC 43067 / DSM 2661 / JAL-1 / JCM 10045 / NBRC 100440)</name>
    <name type="common">Methanococcus jannaschii</name>
    <dbReference type="NCBI Taxonomy" id="243232"/>
    <lineage>
        <taxon>Archaea</taxon>
        <taxon>Methanobacteriati</taxon>
        <taxon>Methanobacteriota</taxon>
        <taxon>Methanomada group</taxon>
        <taxon>Methanococci</taxon>
        <taxon>Methanococcales</taxon>
        <taxon>Methanocaldococcaceae</taxon>
        <taxon>Methanocaldococcus</taxon>
    </lineage>
</organism>
<sequence>MKIIKAVPEEFLNGLYLIPTDRGNLLELDENGNFEVVNNIAIIRVLATPNLKKAIAKIVYQIKDKYYLFKNHKKANWLKNLLEYMNNKIEFDKYYRAKKAWYRGIGDLFRNIRKWEFEKVVGKIISLLKVLNPIVVFDVHDIRKWHYRKSFINFVKELRKNSISVVIRYPIDCHEEIREIFPEGILNTKATIRYFAKVHGYYISDRVAEYLLKITNGNLETIYLILRHSKREIKNLRELKIPWLRILPYIVDSKYRKLVEVIIELRKFKVEDITYKVNYKLSTIYRYLDELVELGILTKIKHKGKVRFKIRLNRNILLTLLKKSKNNYLHWFSIFLLDSIPWDIQIFEFSKSI</sequence>
<gene>
    <name type="ordered locus">MJ0772</name>
</gene>
<name>Y772_METJA</name>
<dbReference type="EMBL" id="L77117">
    <property type="protein sequence ID" value="AAB98776.1"/>
    <property type="molecule type" value="Genomic_DNA"/>
</dbReference>
<dbReference type="PIR" id="D64396">
    <property type="entry name" value="D64396"/>
</dbReference>
<dbReference type="RefSeq" id="WP_010870277.1">
    <property type="nucleotide sequence ID" value="NC_000909.1"/>
</dbReference>
<dbReference type="SMR" id="Q58182"/>
<dbReference type="FunCoup" id="Q58182">
    <property type="interactions" value="4"/>
</dbReference>
<dbReference type="STRING" id="243232.MJ_0772"/>
<dbReference type="PaxDb" id="243232-MJ_0772"/>
<dbReference type="EnsemblBacteria" id="AAB98776">
    <property type="protein sequence ID" value="AAB98776"/>
    <property type="gene ID" value="MJ_0772"/>
</dbReference>
<dbReference type="GeneID" id="1451649"/>
<dbReference type="KEGG" id="mja:MJ_0772"/>
<dbReference type="eggNOG" id="arCOG05049">
    <property type="taxonomic scope" value="Archaea"/>
</dbReference>
<dbReference type="HOGENOM" id="CLU_800796_0_0_2"/>
<dbReference type="InParanoid" id="Q58182"/>
<dbReference type="OrthoDB" id="60541at2157"/>
<dbReference type="Proteomes" id="UP000000805">
    <property type="component" value="Chromosome"/>
</dbReference>
<dbReference type="InterPro" id="IPR036390">
    <property type="entry name" value="WH_DNA-bd_sf"/>
</dbReference>
<dbReference type="SUPFAM" id="SSF46785">
    <property type="entry name" value="Winged helix' DNA-binding domain"/>
    <property type="match status" value="1"/>
</dbReference>